<sequence length="392" mass="40886">MDLFEYQAKELFAAHGVPITPGEVAENPDQAADIARRLGGRVVVKAQVKTGGRGKAGGVKLADDADAAAAAAEAILGMEIRGHRVHRVLVTTAVDIAHEYYVAFLVDRSRRSFLAMGSAEGGVEIEQVAAENPQAIVRVPIDATEGVDATLAARIADDIGFPAAVRDEAVRILRGLWEAFQAEDASLVEVNPLVRTLDDRLIALDGKVTLDDNADFRHPDRARFADPSAADPLEAKAKAAGLHYVKLDGEVGVIGNGAGLVMSTLDVVAYAGETYGGIRPANFLDIGGGASAEVMAAGLTVVLADPAVRAVLVNVFGGITACDAVARGIVAAFENLIAAGERIDVPLVVRLDGNRAAEGRAILAAAQLPRVEQVETMDDAARRVAELAAAAR</sequence>
<reference key="1">
    <citation type="journal article" date="2009" name="Genome Res.">
        <title>Complete genome of the cellulolytic thermophile Acidothermus cellulolyticus 11B provides insights into its ecophysiological and evolutionary adaptations.</title>
        <authorList>
            <person name="Barabote R.D."/>
            <person name="Xie G."/>
            <person name="Leu D.H."/>
            <person name="Normand P."/>
            <person name="Necsulea A."/>
            <person name="Daubin V."/>
            <person name="Medigue C."/>
            <person name="Adney W.S."/>
            <person name="Xu X.C."/>
            <person name="Lapidus A."/>
            <person name="Parales R.E."/>
            <person name="Detter C."/>
            <person name="Pujic P."/>
            <person name="Bruce D."/>
            <person name="Lavire C."/>
            <person name="Challacombe J.F."/>
            <person name="Brettin T.S."/>
            <person name="Berry A.M."/>
        </authorList>
    </citation>
    <scope>NUCLEOTIDE SEQUENCE [LARGE SCALE GENOMIC DNA]</scope>
    <source>
        <strain>ATCC 43068 / DSM 8971 / 11B</strain>
    </source>
</reference>
<dbReference type="EC" id="6.2.1.5" evidence="1"/>
<dbReference type="EMBL" id="CP000481">
    <property type="protein sequence ID" value="ABK52154.1"/>
    <property type="molecule type" value="Genomic_DNA"/>
</dbReference>
<dbReference type="RefSeq" id="WP_011719217.1">
    <property type="nucleotide sequence ID" value="NC_008578.1"/>
</dbReference>
<dbReference type="SMR" id="A0LRU4"/>
<dbReference type="FunCoup" id="A0LRU4">
    <property type="interactions" value="371"/>
</dbReference>
<dbReference type="STRING" id="351607.Acel_0380"/>
<dbReference type="KEGG" id="ace:Acel_0380"/>
<dbReference type="eggNOG" id="COG0045">
    <property type="taxonomic scope" value="Bacteria"/>
</dbReference>
<dbReference type="HOGENOM" id="CLU_037430_0_2_11"/>
<dbReference type="InParanoid" id="A0LRU4"/>
<dbReference type="OrthoDB" id="9802602at2"/>
<dbReference type="UniPathway" id="UPA00223">
    <property type="reaction ID" value="UER00999"/>
</dbReference>
<dbReference type="Proteomes" id="UP000008221">
    <property type="component" value="Chromosome"/>
</dbReference>
<dbReference type="GO" id="GO:0005829">
    <property type="term" value="C:cytosol"/>
    <property type="evidence" value="ECO:0007669"/>
    <property type="project" value="TreeGrafter"/>
</dbReference>
<dbReference type="GO" id="GO:0042709">
    <property type="term" value="C:succinate-CoA ligase complex"/>
    <property type="evidence" value="ECO:0007669"/>
    <property type="project" value="TreeGrafter"/>
</dbReference>
<dbReference type="GO" id="GO:0005524">
    <property type="term" value="F:ATP binding"/>
    <property type="evidence" value="ECO:0007669"/>
    <property type="project" value="UniProtKB-UniRule"/>
</dbReference>
<dbReference type="GO" id="GO:0000287">
    <property type="term" value="F:magnesium ion binding"/>
    <property type="evidence" value="ECO:0007669"/>
    <property type="project" value="UniProtKB-UniRule"/>
</dbReference>
<dbReference type="GO" id="GO:0004775">
    <property type="term" value="F:succinate-CoA ligase (ADP-forming) activity"/>
    <property type="evidence" value="ECO:0007669"/>
    <property type="project" value="UniProtKB-UniRule"/>
</dbReference>
<dbReference type="GO" id="GO:0004776">
    <property type="term" value="F:succinate-CoA ligase (GDP-forming) activity"/>
    <property type="evidence" value="ECO:0007669"/>
    <property type="project" value="RHEA"/>
</dbReference>
<dbReference type="GO" id="GO:0006104">
    <property type="term" value="P:succinyl-CoA metabolic process"/>
    <property type="evidence" value="ECO:0007669"/>
    <property type="project" value="TreeGrafter"/>
</dbReference>
<dbReference type="GO" id="GO:0006099">
    <property type="term" value="P:tricarboxylic acid cycle"/>
    <property type="evidence" value="ECO:0007669"/>
    <property type="project" value="UniProtKB-UniRule"/>
</dbReference>
<dbReference type="FunFam" id="3.30.1490.20:FF:000014">
    <property type="entry name" value="Succinate--CoA ligase [ADP-forming] subunit beta"/>
    <property type="match status" value="1"/>
</dbReference>
<dbReference type="FunFam" id="3.30.470.20:FF:000002">
    <property type="entry name" value="Succinate--CoA ligase [ADP-forming] subunit beta"/>
    <property type="match status" value="1"/>
</dbReference>
<dbReference type="FunFam" id="3.40.50.261:FF:000007">
    <property type="entry name" value="Succinate--CoA ligase [ADP-forming] subunit beta"/>
    <property type="match status" value="1"/>
</dbReference>
<dbReference type="Gene3D" id="3.30.1490.20">
    <property type="entry name" value="ATP-grasp fold, A domain"/>
    <property type="match status" value="1"/>
</dbReference>
<dbReference type="Gene3D" id="3.30.470.20">
    <property type="entry name" value="ATP-grasp fold, B domain"/>
    <property type="match status" value="1"/>
</dbReference>
<dbReference type="Gene3D" id="3.40.50.261">
    <property type="entry name" value="Succinyl-CoA synthetase domains"/>
    <property type="match status" value="1"/>
</dbReference>
<dbReference type="HAMAP" id="MF_00558">
    <property type="entry name" value="Succ_CoA_beta"/>
    <property type="match status" value="1"/>
</dbReference>
<dbReference type="InterPro" id="IPR011761">
    <property type="entry name" value="ATP-grasp"/>
</dbReference>
<dbReference type="InterPro" id="IPR013650">
    <property type="entry name" value="ATP-grasp_succ-CoA_synth-type"/>
</dbReference>
<dbReference type="InterPro" id="IPR013815">
    <property type="entry name" value="ATP_grasp_subdomain_1"/>
</dbReference>
<dbReference type="InterPro" id="IPR017866">
    <property type="entry name" value="Succ-CoA_synthase_bsu_CS"/>
</dbReference>
<dbReference type="InterPro" id="IPR005811">
    <property type="entry name" value="SUCC_ACL_C"/>
</dbReference>
<dbReference type="InterPro" id="IPR005809">
    <property type="entry name" value="Succ_CoA_ligase-like_bsu"/>
</dbReference>
<dbReference type="InterPro" id="IPR016102">
    <property type="entry name" value="Succinyl-CoA_synth-like"/>
</dbReference>
<dbReference type="NCBIfam" id="NF001913">
    <property type="entry name" value="PRK00696.1"/>
    <property type="match status" value="1"/>
</dbReference>
<dbReference type="NCBIfam" id="TIGR01016">
    <property type="entry name" value="sucCoAbeta"/>
    <property type="match status" value="1"/>
</dbReference>
<dbReference type="PANTHER" id="PTHR11815:SF10">
    <property type="entry name" value="SUCCINATE--COA LIGASE [GDP-FORMING] SUBUNIT BETA, MITOCHONDRIAL"/>
    <property type="match status" value="1"/>
</dbReference>
<dbReference type="PANTHER" id="PTHR11815">
    <property type="entry name" value="SUCCINYL-COA SYNTHETASE BETA CHAIN"/>
    <property type="match status" value="1"/>
</dbReference>
<dbReference type="Pfam" id="PF08442">
    <property type="entry name" value="ATP-grasp_2"/>
    <property type="match status" value="1"/>
</dbReference>
<dbReference type="Pfam" id="PF00549">
    <property type="entry name" value="Ligase_CoA"/>
    <property type="match status" value="1"/>
</dbReference>
<dbReference type="PIRSF" id="PIRSF001554">
    <property type="entry name" value="SucCS_beta"/>
    <property type="match status" value="1"/>
</dbReference>
<dbReference type="SUPFAM" id="SSF56059">
    <property type="entry name" value="Glutathione synthetase ATP-binding domain-like"/>
    <property type="match status" value="1"/>
</dbReference>
<dbReference type="SUPFAM" id="SSF52210">
    <property type="entry name" value="Succinyl-CoA synthetase domains"/>
    <property type="match status" value="1"/>
</dbReference>
<dbReference type="PROSITE" id="PS50975">
    <property type="entry name" value="ATP_GRASP"/>
    <property type="match status" value="1"/>
</dbReference>
<dbReference type="PROSITE" id="PS01217">
    <property type="entry name" value="SUCCINYL_COA_LIG_3"/>
    <property type="match status" value="1"/>
</dbReference>
<accession>A0LRU4</accession>
<name>SUCC_ACIC1</name>
<gene>
    <name evidence="1" type="primary">sucC</name>
    <name type="ordered locus">Acel_0380</name>
</gene>
<evidence type="ECO:0000255" key="1">
    <source>
        <dbReference type="HAMAP-Rule" id="MF_00558"/>
    </source>
</evidence>
<proteinExistence type="inferred from homology"/>
<feature type="chain" id="PRO_1000081987" description="Succinate--CoA ligase [ADP-forming] subunit beta">
    <location>
        <begin position="1"/>
        <end position="392"/>
    </location>
</feature>
<feature type="domain" description="ATP-grasp" evidence="1">
    <location>
        <begin position="9"/>
        <end position="236"/>
    </location>
</feature>
<feature type="binding site" evidence="1">
    <location>
        <position position="45"/>
    </location>
    <ligand>
        <name>ATP</name>
        <dbReference type="ChEBI" id="CHEBI:30616"/>
    </ligand>
</feature>
<feature type="binding site" evidence="1">
    <location>
        <begin position="52"/>
        <end position="54"/>
    </location>
    <ligand>
        <name>ATP</name>
        <dbReference type="ChEBI" id="CHEBI:30616"/>
    </ligand>
</feature>
<feature type="binding site" evidence="1">
    <location>
        <position position="94"/>
    </location>
    <ligand>
        <name>ATP</name>
        <dbReference type="ChEBI" id="CHEBI:30616"/>
    </ligand>
</feature>
<feature type="binding site" evidence="1">
    <location>
        <position position="99"/>
    </location>
    <ligand>
        <name>ATP</name>
        <dbReference type="ChEBI" id="CHEBI:30616"/>
    </ligand>
</feature>
<feature type="binding site" evidence="1">
    <location>
        <position position="191"/>
    </location>
    <ligand>
        <name>Mg(2+)</name>
        <dbReference type="ChEBI" id="CHEBI:18420"/>
    </ligand>
</feature>
<feature type="binding site" evidence="1">
    <location>
        <position position="205"/>
    </location>
    <ligand>
        <name>Mg(2+)</name>
        <dbReference type="ChEBI" id="CHEBI:18420"/>
    </ligand>
</feature>
<feature type="binding site" evidence="1">
    <location>
        <position position="256"/>
    </location>
    <ligand>
        <name>substrate</name>
        <note>ligand shared with subunit alpha</note>
    </ligand>
</feature>
<feature type="binding site" evidence="1">
    <location>
        <begin position="318"/>
        <end position="320"/>
    </location>
    <ligand>
        <name>substrate</name>
        <note>ligand shared with subunit alpha</note>
    </ligand>
</feature>
<organism>
    <name type="scientific">Acidothermus cellulolyticus (strain ATCC 43068 / DSM 8971 / 11B)</name>
    <dbReference type="NCBI Taxonomy" id="351607"/>
    <lineage>
        <taxon>Bacteria</taxon>
        <taxon>Bacillati</taxon>
        <taxon>Actinomycetota</taxon>
        <taxon>Actinomycetes</taxon>
        <taxon>Acidothermales</taxon>
        <taxon>Acidothermaceae</taxon>
        <taxon>Acidothermus</taxon>
    </lineage>
</organism>
<protein>
    <recommendedName>
        <fullName evidence="1">Succinate--CoA ligase [ADP-forming] subunit beta</fullName>
        <ecNumber evidence="1">6.2.1.5</ecNumber>
    </recommendedName>
    <alternativeName>
        <fullName evidence="1">Succinyl-CoA synthetase subunit beta</fullName>
        <shortName evidence="1">SCS-beta</shortName>
    </alternativeName>
</protein>
<keyword id="KW-0067">ATP-binding</keyword>
<keyword id="KW-0436">Ligase</keyword>
<keyword id="KW-0460">Magnesium</keyword>
<keyword id="KW-0479">Metal-binding</keyword>
<keyword id="KW-0547">Nucleotide-binding</keyword>
<keyword id="KW-1185">Reference proteome</keyword>
<keyword id="KW-0816">Tricarboxylic acid cycle</keyword>
<comment type="function">
    <text evidence="1">Succinyl-CoA synthetase functions in the citric acid cycle (TCA), coupling the hydrolysis of succinyl-CoA to the synthesis of either ATP or GTP and thus represents the only step of substrate-level phosphorylation in the TCA. The beta subunit provides nucleotide specificity of the enzyme and binds the substrate succinate, while the binding sites for coenzyme A and phosphate are found in the alpha subunit.</text>
</comment>
<comment type="catalytic activity">
    <reaction evidence="1">
        <text>succinate + ATP + CoA = succinyl-CoA + ADP + phosphate</text>
        <dbReference type="Rhea" id="RHEA:17661"/>
        <dbReference type="ChEBI" id="CHEBI:30031"/>
        <dbReference type="ChEBI" id="CHEBI:30616"/>
        <dbReference type="ChEBI" id="CHEBI:43474"/>
        <dbReference type="ChEBI" id="CHEBI:57287"/>
        <dbReference type="ChEBI" id="CHEBI:57292"/>
        <dbReference type="ChEBI" id="CHEBI:456216"/>
        <dbReference type="EC" id="6.2.1.5"/>
    </reaction>
    <physiologicalReaction direction="right-to-left" evidence="1">
        <dbReference type="Rhea" id="RHEA:17663"/>
    </physiologicalReaction>
</comment>
<comment type="catalytic activity">
    <reaction evidence="1">
        <text>GTP + succinate + CoA = succinyl-CoA + GDP + phosphate</text>
        <dbReference type="Rhea" id="RHEA:22120"/>
        <dbReference type="ChEBI" id="CHEBI:30031"/>
        <dbReference type="ChEBI" id="CHEBI:37565"/>
        <dbReference type="ChEBI" id="CHEBI:43474"/>
        <dbReference type="ChEBI" id="CHEBI:57287"/>
        <dbReference type="ChEBI" id="CHEBI:57292"/>
        <dbReference type="ChEBI" id="CHEBI:58189"/>
    </reaction>
    <physiologicalReaction direction="right-to-left" evidence="1">
        <dbReference type="Rhea" id="RHEA:22122"/>
    </physiologicalReaction>
</comment>
<comment type="cofactor">
    <cofactor evidence="1">
        <name>Mg(2+)</name>
        <dbReference type="ChEBI" id="CHEBI:18420"/>
    </cofactor>
    <text evidence="1">Binds 1 Mg(2+) ion per subunit.</text>
</comment>
<comment type="pathway">
    <text evidence="1">Carbohydrate metabolism; tricarboxylic acid cycle; succinate from succinyl-CoA (ligase route): step 1/1.</text>
</comment>
<comment type="subunit">
    <text evidence="1">Heterotetramer of two alpha and two beta subunits.</text>
</comment>
<comment type="similarity">
    <text evidence="1">Belongs to the succinate/malate CoA ligase beta subunit family.</text>
</comment>